<sequence>MSQEKQVFSIDLAGRQLTVETGQLAKQANGAVLVRYGDTAVLSTATASKEAKNVDFFPLTVNYEERLYAVGKIPGGFIKREGRPSEKAILASRLIDRPIRPLFADGFRNEVQVVSIVMSVDQDCSSEMAAMLGSSLALSISDIPFEGPIAGATVGRINGEFVINPTVEQQEQSDIHLVVAGTKDAINMVEAGADQVPEETMLEAIMFGHDEIKRLIAFQEEIVQAVGKEKSEVKLYEVDADLNQAVREMAEKDMHSAIQVHEKHAREDAINEVKKRVIEHYEAEEADADTLGQVNEILYKIVKEEVRRLITVEKIRPDGRKGDEIRPLASEVGILSRTHGSGLFTRGQTQALSICTLGALGDVQILDGLGVEESKRFMHHYNFPSFSVGETRPMRGPGRREIGHGALGERALEPVIPSEKDFPYTVRLVSEVLESNGSTSQASICGSTLAMMDAGVPLKAPVAGIAMGLVKSGEHYTILSDIQGMEDHLGDMDFKVAGTAQGVTALQMDIKIDGLSREILEEALQQAKIGRVHILNHMLSVIAEPRTELSAYAPKIITMTINPDKIRDVIGPSGKQINKIIEETGVKIDIEQDGTVFISSINQEMNDKAKKIIEDIVREVQVGEIYEGKVKRVEKFGAFVELFSGKDGLVHISELALERVGKVEDVVKIGDVITVKVIEIDKQGRVNLSRKVLLKEEQEKEAAKEEDKQEQQ</sequence>
<accession>B7IUG5</accession>
<comment type="function">
    <text evidence="1">Involved in mRNA degradation. Catalyzes the phosphorolysis of single-stranded polyribonucleotides processively in the 3'- to 5'-direction.</text>
</comment>
<comment type="catalytic activity">
    <reaction evidence="1">
        <text>RNA(n+1) + phosphate = RNA(n) + a ribonucleoside 5'-diphosphate</text>
        <dbReference type="Rhea" id="RHEA:22096"/>
        <dbReference type="Rhea" id="RHEA-COMP:14527"/>
        <dbReference type="Rhea" id="RHEA-COMP:17342"/>
        <dbReference type="ChEBI" id="CHEBI:43474"/>
        <dbReference type="ChEBI" id="CHEBI:57930"/>
        <dbReference type="ChEBI" id="CHEBI:140395"/>
        <dbReference type="EC" id="2.7.7.8"/>
    </reaction>
</comment>
<comment type="cofactor">
    <cofactor evidence="1">
        <name>Mg(2+)</name>
        <dbReference type="ChEBI" id="CHEBI:18420"/>
    </cofactor>
</comment>
<comment type="subcellular location">
    <subcellularLocation>
        <location evidence="1">Cytoplasm</location>
    </subcellularLocation>
</comment>
<comment type="similarity">
    <text evidence="1">Belongs to the polyribonucleotide nucleotidyltransferase family.</text>
</comment>
<keyword id="KW-0963">Cytoplasm</keyword>
<keyword id="KW-0460">Magnesium</keyword>
<keyword id="KW-0479">Metal-binding</keyword>
<keyword id="KW-0548">Nucleotidyltransferase</keyword>
<keyword id="KW-0694">RNA-binding</keyword>
<keyword id="KW-0808">Transferase</keyword>
<name>PNP_BACC2</name>
<organism>
    <name type="scientific">Bacillus cereus (strain G9842)</name>
    <dbReference type="NCBI Taxonomy" id="405531"/>
    <lineage>
        <taxon>Bacteria</taxon>
        <taxon>Bacillati</taxon>
        <taxon>Bacillota</taxon>
        <taxon>Bacilli</taxon>
        <taxon>Bacillales</taxon>
        <taxon>Bacillaceae</taxon>
        <taxon>Bacillus</taxon>
        <taxon>Bacillus cereus group</taxon>
    </lineage>
</organism>
<feature type="chain" id="PRO_1000147884" description="Polyribonucleotide nucleotidyltransferase">
    <location>
        <begin position="1"/>
        <end position="712"/>
    </location>
</feature>
<feature type="domain" description="KH" evidence="1">
    <location>
        <begin position="554"/>
        <end position="613"/>
    </location>
</feature>
<feature type="domain" description="S1 motif" evidence="1">
    <location>
        <begin position="623"/>
        <end position="691"/>
    </location>
</feature>
<feature type="binding site" evidence="1">
    <location>
        <position position="487"/>
    </location>
    <ligand>
        <name>Mg(2+)</name>
        <dbReference type="ChEBI" id="CHEBI:18420"/>
    </ligand>
</feature>
<feature type="binding site" evidence="1">
    <location>
        <position position="493"/>
    </location>
    <ligand>
        <name>Mg(2+)</name>
        <dbReference type="ChEBI" id="CHEBI:18420"/>
    </ligand>
</feature>
<reference key="1">
    <citation type="submission" date="2008-10" db="EMBL/GenBank/DDBJ databases">
        <title>Genome sequence of Bacillus cereus G9842.</title>
        <authorList>
            <person name="Dodson R.J."/>
            <person name="Durkin A.S."/>
            <person name="Rosovitz M.J."/>
            <person name="Rasko D.A."/>
            <person name="Hoffmaster A."/>
            <person name="Ravel J."/>
            <person name="Sutton G."/>
        </authorList>
    </citation>
    <scope>NUCLEOTIDE SEQUENCE [LARGE SCALE GENOMIC DNA]</scope>
    <source>
        <strain>G9842</strain>
    </source>
</reference>
<proteinExistence type="inferred from homology"/>
<protein>
    <recommendedName>
        <fullName evidence="1">Polyribonucleotide nucleotidyltransferase</fullName>
        <ecNumber evidence="1">2.7.7.8</ecNumber>
    </recommendedName>
    <alternativeName>
        <fullName evidence="1">Polynucleotide phosphorylase</fullName>
        <shortName evidence="1">PNPase</shortName>
    </alternativeName>
</protein>
<dbReference type="EC" id="2.7.7.8" evidence="1"/>
<dbReference type="EMBL" id="CP001186">
    <property type="protein sequence ID" value="ACK95045.1"/>
    <property type="molecule type" value="Genomic_DNA"/>
</dbReference>
<dbReference type="RefSeq" id="WP_000076744.1">
    <property type="nucleotide sequence ID" value="NC_011772.1"/>
</dbReference>
<dbReference type="SMR" id="B7IUG5"/>
<dbReference type="KEGG" id="bcg:BCG9842_B1339"/>
<dbReference type="HOGENOM" id="CLU_004217_2_2_9"/>
<dbReference type="Proteomes" id="UP000006744">
    <property type="component" value="Chromosome"/>
</dbReference>
<dbReference type="GO" id="GO:0005829">
    <property type="term" value="C:cytosol"/>
    <property type="evidence" value="ECO:0007669"/>
    <property type="project" value="TreeGrafter"/>
</dbReference>
<dbReference type="GO" id="GO:0000175">
    <property type="term" value="F:3'-5'-RNA exonuclease activity"/>
    <property type="evidence" value="ECO:0007669"/>
    <property type="project" value="TreeGrafter"/>
</dbReference>
<dbReference type="GO" id="GO:0000287">
    <property type="term" value="F:magnesium ion binding"/>
    <property type="evidence" value="ECO:0007669"/>
    <property type="project" value="UniProtKB-UniRule"/>
</dbReference>
<dbReference type="GO" id="GO:0004654">
    <property type="term" value="F:polyribonucleotide nucleotidyltransferase activity"/>
    <property type="evidence" value="ECO:0007669"/>
    <property type="project" value="UniProtKB-UniRule"/>
</dbReference>
<dbReference type="GO" id="GO:0003723">
    <property type="term" value="F:RNA binding"/>
    <property type="evidence" value="ECO:0007669"/>
    <property type="project" value="UniProtKB-UniRule"/>
</dbReference>
<dbReference type="GO" id="GO:0006402">
    <property type="term" value="P:mRNA catabolic process"/>
    <property type="evidence" value="ECO:0007669"/>
    <property type="project" value="UniProtKB-UniRule"/>
</dbReference>
<dbReference type="GO" id="GO:0006396">
    <property type="term" value="P:RNA processing"/>
    <property type="evidence" value="ECO:0007669"/>
    <property type="project" value="InterPro"/>
</dbReference>
<dbReference type="CDD" id="cd02393">
    <property type="entry name" value="KH-I_PNPase"/>
    <property type="match status" value="1"/>
</dbReference>
<dbReference type="CDD" id="cd11363">
    <property type="entry name" value="RNase_PH_PNPase_1"/>
    <property type="match status" value="1"/>
</dbReference>
<dbReference type="CDD" id="cd11364">
    <property type="entry name" value="RNase_PH_PNPase_2"/>
    <property type="match status" value="1"/>
</dbReference>
<dbReference type="CDD" id="cd04472">
    <property type="entry name" value="S1_PNPase"/>
    <property type="match status" value="1"/>
</dbReference>
<dbReference type="FunFam" id="2.40.50.140:FF:000023">
    <property type="entry name" value="Polyribonucleotide nucleotidyltransferase"/>
    <property type="match status" value="1"/>
</dbReference>
<dbReference type="FunFam" id="3.30.1370.10:FF:000001">
    <property type="entry name" value="Polyribonucleotide nucleotidyltransferase"/>
    <property type="match status" value="1"/>
</dbReference>
<dbReference type="FunFam" id="3.30.230.70:FF:000001">
    <property type="entry name" value="Polyribonucleotide nucleotidyltransferase"/>
    <property type="match status" value="1"/>
</dbReference>
<dbReference type="FunFam" id="3.30.230.70:FF:000002">
    <property type="entry name" value="Polyribonucleotide nucleotidyltransferase"/>
    <property type="match status" value="1"/>
</dbReference>
<dbReference type="Gene3D" id="3.30.230.70">
    <property type="entry name" value="GHMP Kinase, N-terminal domain"/>
    <property type="match status" value="2"/>
</dbReference>
<dbReference type="Gene3D" id="3.30.1370.10">
    <property type="entry name" value="K Homology domain, type 1"/>
    <property type="match status" value="1"/>
</dbReference>
<dbReference type="Gene3D" id="2.40.50.140">
    <property type="entry name" value="Nucleic acid-binding proteins"/>
    <property type="match status" value="1"/>
</dbReference>
<dbReference type="HAMAP" id="MF_01595">
    <property type="entry name" value="PNPase"/>
    <property type="match status" value="1"/>
</dbReference>
<dbReference type="InterPro" id="IPR001247">
    <property type="entry name" value="ExoRNase_PH_dom1"/>
</dbReference>
<dbReference type="InterPro" id="IPR015847">
    <property type="entry name" value="ExoRNase_PH_dom2"/>
</dbReference>
<dbReference type="InterPro" id="IPR036345">
    <property type="entry name" value="ExoRNase_PH_dom2_sf"/>
</dbReference>
<dbReference type="InterPro" id="IPR004087">
    <property type="entry name" value="KH_dom"/>
</dbReference>
<dbReference type="InterPro" id="IPR004088">
    <property type="entry name" value="KH_dom_type_1"/>
</dbReference>
<dbReference type="InterPro" id="IPR036612">
    <property type="entry name" value="KH_dom_type_1_sf"/>
</dbReference>
<dbReference type="InterPro" id="IPR012340">
    <property type="entry name" value="NA-bd_OB-fold"/>
</dbReference>
<dbReference type="InterPro" id="IPR012162">
    <property type="entry name" value="PNPase"/>
</dbReference>
<dbReference type="InterPro" id="IPR027408">
    <property type="entry name" value="PNPase/RNase_PH_dom_sf"/>
</dbReference>
<dbReference type="InterPro" id="IPR015848">
    <property type="entry name" value="PNPase_PH_RNA-bd_bac/org-type"/>
</dbReference>
<dbReference type="InterPro" id="IPR020568">
    <property type="entry name" value="Ribosomal_Su5_D2-typ_SF"/>
</dbReference>
<dbReference type="InterPro" id="IPR003029">
    <property type="entry name" value="S1_domain"/>
</dbReference>
<dbReference type="NCBIfam" id="TIGR03591">
    <property type="entry name" value="polynuc_phos"/>
    <property type="match status" value="1"/>
</dbReference>
<dbReference type="NCBIfam" id="NF008805">
    <property type="entry name" value="PRK11824.1"/>
    <property type="match status" value="1"/>
</dbReference>
<dbReference type="PANTHER" id="PTHR11252">
    <property type="entry name" value="POLYRIBONUCLEOTIDE NUCLEOTIDYLTRANSFERASE"/>
    <property type="match status" value="1"/>
</dbReference>
<dbReference type="PANTHER" id="PTHR11252:SF0">
    <property type="entry name" value="POLYRIBONUCLEOTIDE NUCLEOTIDYLTRANSFERASE 1, MITOCHONDRIAL"/>
    <property type="match status" value="1"/>
</dbReference>
<dbReference type="Pfam" id="PF00013">
    <property type="entry name" value="KH_1"/>
    <property type="match status" value="1"/>
</dbReference>
<dbReference type="Pfam" id="PF03726">
    <property type="entry name" value="PNPase"/>
    <property type="match status" value="1"/>
</dbReference>
<dbReference type="Pfam" id="PF01138">
    <property type="entry name" value="RNase_PH"/>
    <property type="match status" value="2"/>
</dbReference>
<dbReference type="Pfam" id="PF03725">
    <property type="entry name" value="RNase_PH_C"/>
    <property type="match status" value="2"/>
</dbReference>
<dbReference type="Pfam" id="PF00575">
    <property type="entry name" value="S1"/>
    <property type="match status" value="1"/>
</dbReference>
<dbReference type="PIRSF" id="PIRSF005499">
    <property type="entry name" value="PNPase"/>
    <property type="match status" value="1"/>
</dbReference>
<dbReference type="SMART" id="SM00322">
    <property type="entry name" value="KH"/>
    <property type="match status" value="1"/>
</dbReference>
<dbReference type="SMART" id="SM00316">
    <property type="entry name" value="S1"/>
    <property type="match status" value="1"/>
</dbReference>
<dbReference type="SUPFAM" id="SSF54791">
    <property type="entry name" value="Eukaryotic type KH-domain (KH-domain type I)"/>
    <property type="match status" value="1"/>
</dbReference>
<dbReference type="SUPFAM" id="SSF50249">
    <property type="entry name" value="Nucleic acid-binding proteins"/>
    <property type="match status" value="1"/>
</dbReference>
<dbReference type="SUPFAM" id="SSF55666">
    <property type="entry name" value="Ribonuclease PH domain 2-like"/>
    <property type="match status" value="2"/>
</dbReference>
<dbReference type="SUPFAM" id="SSF54211">
    <property type="entry name" value="Ribosomal protein S5 domain 2-like"/>
    <property type="match status" value="2"/>
</dbReference>
<dbReference type="PROSITE" id="PS50084">
    <property type="entry name" value="KH_TYPE_1"/>
    <property type="match status" value="1"/>
</dbReference>
<dbReference type="PROSITE" id="PS50126">
    <property type="entry name" value="S1"/>
    <property type="match status" value="1"/>
</dbReference>
<evidence type="ECO:0000255" key="1">
    <source>
        <dbReference type="HAMAP-Rule" id="MF_01595"/>
    </source>
</evidence>
<gene>
    <name evidence="1" type="primary">pnp</name>
    <name type="ordered locus">BCG9842_B1339</name>
</gene>